<feature type="chain" id="PRO_0000049680" description="Uncharacterized protein YpbF">
    <location>
        <begin position="1"/>
        <end position="147"/>
    </location>
</feature>
<feature type="transmembrane region" description="Helical" evidence="1">
    <location>
        <begin position="42"/>
        <end position="62"/>
    </location>
</feature>
<feature type="transmembrane region" description="Helical" evidence="1">
    <location>
        <begin position="64"/>
        <end position="84"/>
    </location>
</feature>
<gene>
    <name type="primary">ypbF</name>
    <name type="ordered locus">BSU22990</name>
</gene>
<sequence>MESLWNQLDQFTDAPTKQMLQALVKRKQKFENYAAQCRRWRWASLICLGLLCVMIMIKSPEPQLILQEILSHTFYLFWMLATAFAYCTSYYFKKKEEKSETDFHKLRCEIIQKSTDLWPQPDKWKARESVFHMMKHKYDINLYFESK</sequence>
<comment type="subcellular location">
    <subcellularLocation>
        <location evidence="2">Cell membrane</location>
        <topology evidence="2">Multi-pass membrane protein</topology>
    </subcellularLocation>
</comment>
<reference key="1">
    <citation type="journal article" date="1996" name="Microbiology">
        <title>Sequence analysis of the Bacillus subtilis chromosome region between the serA and kdg loci cloned in a yeast artificial chromosome.</title>
        <authorList>
            <person name="Sorokin A.V."/>
            <person name="Azevedo V."/>
            <person name="Zumstein E."/>
            <person name="Galleron N."/>
            <person name="Ehrlich S.D."/>
            <person name="Serror P."/>
        </authorList>
    </citation>
    <scope>NUCLEOTIDE SEQUENCE [GENOMIC DNA]</scope>
    <source>
        <strain>168 / Marburg / ATCC 6051 / DSM 10 / JCM 1465 / NBRC 13719 / NCIMB 3610 / NRRL NRS-744 / VKM B-501</strain>
    </source>
</reference>
<reference key="2">
    <citation type="journal article" date="1997" name="Nature">
        <title>The complete genome sequence of the Gram-positive bacterium Bacillus subtilis.</title>
        <authorList>
            <person name="Kunst F."/>
            <person name="Ogasawara N."/>
            <person name="Moszer I."/>
            <person name="Albertini A.M."/>
            <person name="Alloni G."/>
            <person name="Azevedo V."/>
            <person name="Bertero M.G."/>
            <person name="Bessieres P."/>
            <person name="Bolotin A."/>
            <person name="Borchert S."/>
            <person name="Borriss R."/>
            <person name="Boursier L."/>
            <person name="Brans A."/>
            <person name="Braun M."/>
            <person name="Brignell S.C."/>
            <person name="Bron S."/>
            <person name="Brouillet S."/>
            <person name="Bruschi C.V."/>
            <person name="Caldwell B."/>
            <person name="Capuano V."/>
            <person name="Carter N.M."/>
            <person name="Choi S.-K."/>
            <person name="Codani J.-J."/>
            <person name="Connerton I.F."/>
            <person name="Cummings N.J."/>
            <person name="Daniel R.A."/>
            <person name="Denizot F."/>
            <person name="Devine K.M."/>
            <person name="Duesterhoeft A."/>
            <person name="Ehrlich S.D."/>
            <person name="Emmerson P.T."/>
            <person name="Entian K.-D."/>
            <person name="Errington J."/>
            <person name="Fabret C."/>
            <person name="Ferrari E."/>
            <person name="Foulger D."/>
            <person name="Fritz C."/>
            <person name="Fujita M."/>
            <person name="Fujita Y."/>
            <person name="Fuma S."/>
            <person name="Galizzi A."/>
            <person name="Galleron N."/>
            <person name="Ghim S.-Y."/>
            <person name="Glaser P."/>
            <person name="Goffeau A."/>
            <person name="Golightly E.J."/>
            <person name="Grandi G."/>
            <person name="Guiseppi G."/>
            <person name="Guy B.J."/>
            <person name="Haga K."/>
            <person name="Haiech J."/>
            <person name="Harwood C.R."/>
            <person name="Henaut A."/>
            <person name="Hilbert H."/>
            <person name="Holsappel S."/>
            <person name="Hosono S."/>
            <person name="Hullo M.-F."/>
            <person name="Itaya M."/>
            <person name="Jones L.-M."/>
            <person name="Joris B."/>
            <person name="Karamata D."/>
            <person name="Kasahara Y."/>
            <person name="Klaerr-Blanchard M."/>
            <person name="Klein C."/>
            <person name="Kobayashi Y."/>
            <person name="Koetter P."/>
            <person name="Koningstein G."/>
            <person name="Krogh S."/>
            <person name="Kumano M."/>
            <person name="Kurita K."/>
            <person name="Lapidus A."/>
            <person name="Lardinois S."/>
            <person name="Lauber J."/>
            <person name="Lazarevic V."/>
            <person name="Lee S.-M."/>
            <person name="Levine A."/>
            <person name="Liu H."/>
            <person name="Masuda S."/>
            <person name="Mauel C."/>
            <person name="Medigue C."/>
            <person name="Medina N."/>
            <person name="Mellado R.P."/>
            <person name="Mizuno M."/>
            <person name="Moestl D."/>
            <person name="Nakai S."/>
            <person name="Noback M."/>
            <person name="Noone D."/>
            <person name="O'Reilly M."/>
            <person name="Ogawa K."/>
            <person name="Ogiwara A."/>
            <person name="Oudega B."/>
            <person name="Park S.-H."/>
            <person name="Parro V."/>
            <person name="Pohl T.M."/>
            <person name="Portetelle D."/>
            <person name="Porwollik S."/>
            <person name="Prescott A.M."/>
            <person name="Presecan E."/>
            <person name="Pujic P."/>
            <person name="Purnelle B."/>
            <person name="Rapoport G."/>
            <person name="Rey M."/>
            <person name="Reynolds S."/>
            <person name="Rieger M."/>
            <person name="Rivolta C."/>
            <person name="Rocha E."/>
            <person name="Roche B."/>
            <person name="Rose M."/>
            <person name="Sadaie Y."/>
            <person name="Sato T."/>
            <person name="Scanlan E."/>
            <person name="Schleich S."/>
            <person name="Schroeter R."/>
            <person name="Scoffone F."/>
            <person name="Sekiguchi J."/>
            <person name="Sekowska A."/>
            <person name="Seror S.J."/>
            <person name="Serror P."/>
            <person name="Shin B.-S."/>
            <person name="Soldo B."/>
            <person name="Sorokin A."/>
            <person name="Tacconi E."/>
            <person name="Takagi T."/>
            <person name="Takahashi H."/>
            <person name="Takemaru K."/>
            <person name="Takeuchi M."/>
            <person name="Tamakoshi A."/>
            <person name="Tanaka T."/>
            <person name="Terpstra P."/>
            <person name="Tognoni A."/>
            <person name="Tosato V."/>
            <person name="Uchiyama S."/>
            <person name="Vandenbol M."/>
            <person name="Vannier F."/>
            <person name="Vassarotti A."/>
            <person name="Viari A."/>
            <person name="Wambutt R."/>
            <person name="Wedler E."/>
            <person name="Wedler H."/>
            <person name="Weitzenegger T."/>
            <person name="Winters P."/>
            <person name="Wipat A."/>
            <person name="Yamamoto H."/>
            <person name="Yamane K."/>
            <person name="Yasumoto K."/>
            <person name="Yata K."/>
            <person name="Yoshida K."/>
            <person name="Yoshikawa H.-F."/>
            <person name="Zumstein E."/>
            <person name="Yoshikawa H."/>
            <person name="Danchin A."/>
        </authorList>
    </citation>
    <scope>NUCLEOTIDE SEQUENCE [LARGE SCALE GENOMIC DNA]</scope>
    <source>
        <strain>168</strain>
    </source>
</reference>
<accession>P50732</accession>
<organism>
    <name type="scientific">Bacillus subtilis (strain 168)</name>
    <dbReference type="NCBI Taxonomy" id="224308"/>
    <lineage>
        <taxon>Bacteria</taxon>
        <taxon>Bacillati</taxon>
        <taxon>Bacillota</taxon>
        <taxon>Bacilli</taxon>
        <taxon>Bacillales</taxon>
        <taxon>Bacillaceae</taxon>
        <taxon>Bacillus</taxon>
    </lineage>
</organism>
<proteinExistence type="predicted"/>
<evidence type="ECO:0000255" key="1"/>
<evidence type="ECO:0000305" key="2"/>
<dbReference type="EMBL" id="L47648">
    <property type="protein sequence ID" value="AAC83950.1"/>
    <property type="molecule type" value="Genomic_DNA"/>
</dbReference>
<dbReference type="EMBL" id="AL009126">
    <property type="protein sequence ID" value="CAB14215.1"/>
    <property type="molecule type" value="Genomic_DNA"/>
</dbReference>
<dbReference type="PIR" id="A69933">
    <property type="entry name" value="A69933"/>
</dbReference>
<dbReference type="RefSeq" id="NP_390180.1">
    <property type="nucleotide sequence ID" value="NC_000964.3"/>
</dbReference>
<dbReference type="RefSeq" id="WP_003230531.1">
    <property type="nucleotide sequence ID" value="NZ_OZ025638.1"/>
</dbReference>
<dbReference type="SMR" id="P50732"/>
<dbReference type="FunCoup" id="P50732">
    <property type="interactions" value="4"/>
</dbReference>
<dbReference type="STRING" id="224308.BSU22990"/>
<dbReference type="PaxDb" id="224308-BSU22990"/>
<dbReference type="EnsemblBacteria" id="CAB14215">
    <property type="protein sequence ID" value="CAB14215"/>
    <property type="gene ID" value="BSU_22990"/>
</dbReference>
<dbReference type="GeneID" id="938976"/>
<dbReference type="KEGG" id="bsu:BSU22990"/>
<dbReference type="PATRIC" id="fig|224308.179.peg.2506"/>
<dbReference type="eggNOG" id="ENOG50338GN">
    <property type="taxonomic scope" value="Bacteria"/>
</dbReference>
<dbReference type="InParanoid" id="P50732"/>
<dbReference type="OrthoDB" id="2969742at2"/>
<dbReference type="BioCyc" id="BSUB:BSU22990-MONOMER"/>
<dbReference type="Proteomes" id="UP000001570">
    <property type="component" value="Chromosome"/>
</dbReference>
<dbReference type="GO" id="GO:0005886">
    <property type="term" value="C:plasma membrane"/>
    <property type="evidence" value="ECO:0007669"/>
    <property type="project" value="UniProtKB-SubCell"/>
</dbReference>
<dbReference type="InterPro" id="IPR020210">
    <property type="entry name" value="Uncharacterised_YpbF_TM"/>
</dbReference>
<dbReference type="Pfam" id="PF10864">
    <property type="entry name" value="DUF2663"/>
    <property type="match status" value="1"/>
</dbReference>
<keyword id="KW-1003">Cell membrane</keyword>
<keyword id="KW-0472">Membrane</keyword>
<keyword id="KW-1185">Reference proteome</keyword>
<keyword id="KW-0812">Transmembrane</keyword>
<keyword id="KW-1133">Transmembrane helix</keyword>
<name>YPBF_BACSU</name>
<protein>
    <recommendedName>
        <fullName>Uncharacterized protein YpbF</fullName>
    </recommendedName>
</protein>